<protein>
    <recommendedName>
        <fullName evidence="1">SsrA-binding protein</fullName>
    </recommendedName>
    <alternativeName>
        <fullName evidence="1">Small protein B</fullName>
    </alternativeName>
</protein>
<accession>B0KIT1</accession>
<organism>
    <name type="scientific">Pseudomonas putida (strain GB-1)</name>
    <dbReference type="NCBI Taxonomy" id="76869"/>
    <lineage>
        <taxon>Bacteria</taxon>
        <taxon>Pseudomonadati</taxon>
        <taxon>Pseudomonadota</taxon>
        <taxon>Gammaproteobacteria</taxon>
        <taxon>Pseudomonadales</taxon>
        <taxon>Pseudomonadaceae</taxon>
        <taxon>Pseudomonas</taxon>
    </lineage>
</organism>
<keyword id="KW-0963">Cytoplasm</keyword>
<keyword id="KW-0694">RNA-binding</keyword>
<sequence>MAKQKKHPTGTIAQNKKARHDYFIEHKFEAGLVLSGWEVKSLRAGKAHLTDSYVLLKDGEAWLFGSHITPLTTASTHVIADPIRTRKLLLNKRELERLEAAVAQKGYTCVALALYWSKHLIKCEIALGKGKKEFDKRDTMRERDSNRELQRAVRNKGKED</sequence>
<reference key="1">
    <citation type="submission" date="2008-01" db="EMBL/GenBank/DDBJ databases">
        <title>Complete sequence of Pseudomonas putida GB-1.</title>
        <authorList>
            <consortium name="US DOE Joint Genome Institute"/>
            <person name="Copeland A."/>
            <person name="Lucas S."/>
            <person name="Lapidus A."/>
            <person name="Barry K."/>
            <person name="Glavina del Rio T."/>
            <person name="Dalin E."/>
            <person name="Tice H."/>
            <person name="Pitluck S."/>
            <person name="Bruce D."/>
            <person name="Goodwin L."/>
            <person name="Chertkov O."/>
            <person name="Brettin T."/>
            <person name="Detter J.C."/>
            <person name="Han C."/>
            <person name="Kuske C.R."/>
            <person name="Schmutz J."/>
            <person name="Larimer F."/>
            <person name="Land M."/>
            <person name="Hauser L."/>
            <person name="Kyrpides N."/>
            <person name="Kim E."/>
            <person name="McCarthy J.K."/>
            <person name="Richardson P."/>
        </authorList>
    </citation>
    <scope>NUCLEOTIDE SEQUENCE [LARGE SCALE GENOMIC DNA]</scope>
    <source>
        <strain>GB-1</strain>
    </source>
</reference>
<feature type="chain" id="PRO_1000074362" description="SsrA-binding protein">
    <location>
        <begin position="1"/>
        <end position="160"/>
    </location>
</feature>
<feature type="region of interest" description="Disordered" evidence="2">
    <location>
        <begin position="136"/>
        <end position="160"/>
    </location>
</feature>
<comment type="function">
    <text evidence="1">Required for rescue of stalled ribosomes mediated by trans-translation. Binds to transfer-messenger RNA (tmRNA), required for stable association of tmRNA with ribosomes. tmRNA and SmpB together mimic tRNA shape, replacing the anticodon stem-loop with SmpB. tmRNA is encoded by the ssrA gene; the 2 termini fold to resemble tRNA(Ala) and it encodes a 'tag peptide', a short internal open reading frame. During trans-translation Ala-aminoacylated tmRNA acts like a tRNA, entering the A-site of stalled ribosomes, displacing the stalled mRNA. The ribosome then switches to translate the ORF on the tmRNA; the nascent peptide is terminated with the 'tag peptide' encoded by the tmRNA and targeted for degradation. The ribosome is freed to recommence translation, which seems to be the essential function of trans-translation.</text>
</comment>
<comment type="subcellular location">
    <subcellularLocation>
        <location evidence="1">Cytoplasm</location>
    </subcellularLocation>
    <text evidence="1">The tmRNA-SmpB complex associates with stalled 70S ribosomes.</text>
</comment>
<comment type="similarity">
    <text evidence="1">Belongs to the SmpB family.</text>
</comment>
<gene>
    <name evidence="1" type="primary">smpB</name>
    <name type="ordered locus">PputGB1_4734</name>
</gene>
<dbReference type="EMBL" id="CP000926">
    <property type="protein sequence ID" value="ABZ00621.1"/>
    <property type="molecule type" value="Genomic_DNA"/>
</dbReference>
<dbReference type="RefSeq" id="WP_012274261.1">
    <property type="nucleotide sequence ID" value="NC_010322.1"/>
</dbReference>
<dbReference type="SMR" id="B0KIT1"/>
<dbReference type="GeneID" id="83672109"/>
<dbReference type="KEGG" id="ppg:PputGB1_4734"/>
<dbReference type="eggNOG" id="COG0691">
    <property type="taxonomic scope" value="Bacteria"/>
</dbReference>
<dbReference type="HOGENOM" id="CLU_108953_3_0_6"/>
<dbReference type="Proteomes" id="UP000002157">
    <property type="component" value="Chromosome"/>
</dbReference>
<dbReference type="GO" id="GO:0005829">
    <property type="term" value="C:cytosol"/>
    <property type="evidence" value="ECO:0007669"/>
    <property type="project" value="TreeGrafter"/>
</dbReference>
<dbReference type="GO" id="GO:0003723">
    <property type="term" value="F:RNA binding"/>
    <property type="evidence" value="ECO:0007669"/>
    <property type="project" value="UniProtKB-UniRule"/>
</dbReference>
<dbReference type="GO" id="GO:0070929">
    <property type="term" value="P:trans-translation"/>
    <property type="evidence" value="ECO:0007669"/>
    <property type="project" value="UniProtKB-UniRule"/>
</dbReference>
<dbReference type="CDD" id="cd09294">
    <property type="entry name" value="SmpB"/>
    <property type="match status" value="1"/>
</dbReference>
<dbReference type="Gene3D" id="2.40.280.10">
    <property type="match status" value="1"/>
</dbReference>
<dbReference type="HAMAP" id="MF_00023">
    <property type="entry name" value="SmpB"/>
    <property type="match status" value="1"/>
</dbReference>
<dbReference type="InterPro" id="IPR023620">
    <property type="entry name" value="SmpB"/>
</dbReference>
<dbReference type="InterPro" id="IPR000037">
    <property type="entry name" value="SsrA-bd_prot"/>
</dbReference>
<dbReference type="InterPro" id="IPR020081">
    <property type="entry name" value="SsrA-bd_prot_CS"/>
</dbReference>
<dbReference type="NCBIfam" id="NF003843">
    <property type="entry name" value="PRK05422.1"/>
    <property type="match status" value="1"/>
</dbReference>
<dbReference type="NCBIfam" id="TIGR00086">
    <property type="entry name" value="smpB"/>
    <property type="match status" value="1"/>
</dbReference>
<dbReference type="PANTHER" id="PTHR30308:SF2">
    <property type="entry name" value="SSRA-BINDING PROTEIN"/>
    <property type="match status" value="1"/>
</dbReference>
<dbReference type="PANTHER" id="PTHR30308">
    <property type="entry name" value="TMRNA-BINDING COMPONENT OF TRANS-TRANSLATION TAGGING COMPLEX"/>
    <property type="match status" value="1"/>
</dbReference>
<dbReference type="Pfam" id="PF01668">
    <property type="entry name" value="SmpB"/>
    <property type="match status" value="1"/>
</dbReference>
<dbReference type="SUPFAM" id="SSF74982">
    <property type="entry name" value="Small protein B (SmpB)"/>
    <property type="match status" value="1"/>
</dbReference>
<dbReference type="PROSITE" id="PS01317">
    <property type="entry name" value="SSRP"/>
    <property type="match status" value="1"/>
</dbReference>
<proteinExistence type="inferred from homology"/>
<evidence type="ECO:0000255" key="1">
    <source>
        <dbReference type="HAMAP-Rule" id="MF_00023"/>
    </source>
</evidence>
<evidence type="ECO:0000256" key="2">
    <source>
        <dbReference type="SAM" id="MobiDB-lite"/>
    </source>
</evidence>
<name>SSRP_PSEPG</name>